<name>PANB_XANCP</name>
<dbReference type="EC" id="2.1.2.11" evidence="1"/>
<dbReference type="EMBL" id="AE008922">
    <property type="protein sequence ID" value="AAM41058.1"/>
    <property type="molecule type" value="Genomic_DNA"/>
</dbReference>
<dbReference type="RefSeq" id="NP_637134.1">
    <property type="nucleotide sequence ID" value="NC_003902.1"/>
</dbReference>
<dbReference type="RefSeq" id="WP_011036941.1">
    <property type="nucleotide sequence ID" value="NC_003902.1"/>
</dbReference>
<dbReference type="SMR" id="Q8P9T0"/>
<dbReference type="STRING" id="190485.XCC1768"/>
<dbReference type="EnsemblBacteria" id="AAM41058">
    <property type="protein sequence ID" value="AAM41058"/>
    <property type="gene ID" value="XCC1768"/>
</dbReference>
<dbReference type="KEGG" id="xcc:XCC1768"/>
<dbReference type="PATRIC" id="fig|190485.4.peg.1884"/>
<dbReference type="eggNOG" id="COG0413">
    <property type="taxonomic scope" value="Bacteria"/>
</dbReference>
<dbReference type="HOGENOM" id="CLU_036645_1_0_6"/>
<dbReference type="OrthoDB" id="9781789at2"/>
<dbReference type="UniPathway" id="UPA00028">
    <property type="reaction ID" value="UER00003"/>
</dbReference>
<dbReference type="Proteomes" id="UP000001010">
    <property type="component" value="Chromosome"/>
</dbReference>
<dbReference type="GO" id="GO:0005737">
    <property type="term" value="C:cytoplasm"/>
    <property type="evidence" value="ECO:0000318"/>
    <property type="project" value="GO_Central"/>
</dbReference>
<dbReference type="GO" id="GO:0003864">
    <property type="term" value="F:3-methyl-2-oxobutanoate hydroxymethyltransferase activity"/>
    <property type="evidence" value="ECO:0000318"/>
    <property type="project" value="GO_Central"/>
</dbReference>
<dbReference type="GO" id="GO:0000287">
    <property type="term" value="F:magnesium ion binding"/>
    <property type="evidence" value="ECO:0000318"/>
    <property type="project" value="GO_Central"/>
</dbReference>
<dbReference type="GO" id="GO:0015940">
    <property type="term" value="P:pantothenate biosynthetic process"/>
    <property type="evidence" value="ECO:0000318"/>
    <property type="project" value="GO_Central"/>
</dbReference>
<dbReference type="CDD" id="cd06557">
    <property type="entry name" value="KPHMT-like"/>
    <property type="match status" value="1"/>
</dbReference>
<dbReference type="FunFam" id="3.20.20.60:FF:000032">
    <property type="entry name" value="3-methyl-2-oxobutanoate hydroxymethyltransferase"/>
    <property type="match status" value="1"/>
</dbReference>
<dbReference type="Gene3D" id="3.20.20.60">
    <property type="entry name" value="Phosphoenolpyruvate-binding domains"/>
    <property type="match status" value="1"/>
</dbReference>
<dbReference type="HAMAP" id="MF_00156">
    <property type="entry name" value="PanB"/>
    <property type="match status" value="1"/>
</dbReference>
<dbReference type="InterPro" id="IPR003700">
    <property type="entry name" value="Pantoate_hydroxy_MeTrfase"/>
</dbReference>
<dbReference type="InterPro" id="IPR015813">
    <property type="entry name" value="Pyrv/PenolPyrv_kinase-like_dom"/>
</dbReference>
<dbReference type="InterPro" id="IPR040442">
    <property type="entry name" value="Pyrv_kinase-like_dom_sf"/>
</dbReference>
<dbReference type="NCBIfam" id="TIGR00222">
    <property type="entry name" value="panB"/>
    <property type="match status" value="1"/>
</dbReference>
<dbReference type="NCBIfam" id="NF001452">
    <property type="entry name" value="PRK00311.1"/>
    <property type="match status" value="1"/>
</dbReference>
<dbReference type="PANTHER" id="PTHR20881">
    <property type="entry name" value="3-METHYL-2-OXOBUTANOATE HYDROXYMETHYLTRANSFERASE"/>
    <property type="match status" value="1"/>
</dbReference>
<dbReference type="PANTHER" id="PTHR20881:SF0">
    <property type="entry name" value="3-METHYL-2-OXOBUTANOATE HYDROXYMETHYLTRANSFERASE"/>
    <property type="match status" value="1"/>
</dbReference>
<dbReference type="Pfam" id="PF02548">
    <property type="entry name" value="Pantoate_transf"/>
    <property type="match status" value="1"/>
</dbReference>
<dbReference type="PIRSF" id="PIRSF000388">
    <property type="entry name" value="Pantoate_hydroxy_MeTrfase"/>
    <property type="match status" value="1"/>
</dbReference>
<dbReference type="SUPFAM" id="SSF51621">
    <property type="entry name" value="Phosphoenolpyruvate/pyruvate domain"/>
    <property type="match status" value="1"/>
</dbReference>
<proteinExistence type="inferred from homology"/>
<keyword id="KW-0963">Cytoplasm</keyword>
<keyword id="KW-0460">Magnesium</keyword>
<keyword id="KW-0479">Metal-binding</keyword>
<keyword id="KW-0566">Pantothenate biosynthesis</keyword>
<keyword id="KW-1185">Reference proteome</keyword>
<keyword id="KW-0808">Transferase</keyword>
<gene>
    <name evidence="1" type="primary">panB</name>
    <name type="ordered locus">XCC1768</name>
</gene>
<organism>
    <name type="scientific">Xanthomonas campestris pv. campestris (strain ATCC 33913 / DSM 3586 / NCPPB 528 / LMG 568 / P 25)</name>
    <dbReference type="NCBI Taxonomy" id="190485"/>
    <lineage>
        <taxon>Bacteria</taxon>
        <taxon>Pseudomonadati</taxon>
        <taxon>Pseudomonadota</taxon>
        <taxon>Gammaproteobacteria</taxon>
        <taxon>Lysobacterales</taxon>
        <taxon>Lysobacteraceae</taxon>
        <taxon>Xanthomonas</taxon>
    </lineage>
</organism>
<comment type="function">
    <text evidence="1">Catalyzes the reversible reaction in which hydroxymethyl group from 5,10-methylenetetrahydrofolate is transferred onto alpha-ketoisovalerate to form ketopantoate.</text>
</comment>
<comment type="catalytic activity">
    <reaction evidence="1">
        <text>3-methyl-2-oxobutanoate + (6R)-5,10-methylene-5,6,7,8-tetrahydrofolate + H2O = 2-dehydropantoate + (6S)-5,6,7,8-tetrahydrofolate</text>
        <dbReference type="Rhea" id="RHEA:11824"/>
        <dbReference type="ChEBI" id="CHEBI:11561"/>
        <dbReference type="ChEBI" id="CHEBI:11851"/>
        <dbReference type="ChEBI" id="CHEBI:15377"/>
        <dbReference type="ChEBI" id="CHEBI:15636"/>
        <dbReference type="ChEBI" id="CHEBI:57453"/>
        <dbReference type="EC" id="2.1.2.11"/>
    </reaction>
</comment>
<comment type="cofactor">
    <cofactor evidence="1">
        <name>Mg(2+)</name>
        <dbReference type="ChEBI" id="CHEBI:18420"/>
    </cofactor>
    <text evidence="1">Binds 1 Mg(2+) ion per subunit.</text>
</comment>
<comment type="pathway">
    <text evidence="1">Cofactor biosynthesis; (R)-pantothenate biosynthesis; (R)-pantoate from 3-methyl-2-oxobutanoate: step 1/2.</text>
</comment>
<comment type="subunit">
    <text evidence="1">Homodecamer; pentamer of dimers.</text>
</comment>
<comment type="subcellular location">
    <subcellularLocation>
        <location evidence="1">Cytoplasm</location>
    </subcellularLocation>
</comment>
<comment type="similarity">
    <text evidence="1">Belongs to the PanB family.</text>
</comment>
<sequence length="271" mass="28495">MSSHADSKPWTVPALAQAKRDGRKLVMLTAYDAGFARTFDANGVDLILVGDSLGMVVQGHESTLPVTTADMVYHTAAVARVLERALLVADLSFQADATPERALDAATQLLQAGAEMVKIEGAGHKLDVIRYLVEREIPVCSHLGLTPQSVLRFGGYKVQGRGEAGEQLRRDAQAAVDAGASLIVLECVPTPIAAQISAELRVPTIGIGAGPGCDGQVLVMHDMLGLDSGHRRPKFVKDFLAEGGSVAGAVQAYAQAVRDGSFPDAEHAYAA</sequence>
<protein>
    <recommendedName>
        <fullName evidence="1">3-methyl-2-oxobutanoate hydroxymethyltransferase</fullName>
        <ecNumber evidence="1">2.1.2.11</ecNumber>
    </recommendedName>
    <alternativeName>
        <fullName evidence="1">Ketopantoate hydroxymethyltransferase</fullName>
        <shortName evidence="1">KPHMT</shortName>
    </alternativeName>
</protein>
<feature type="chain" id="PRO_0000184910" description="3-methyl-2-oxobutanoate hydroxymethyltransferase">
    <location>
        <begin position="1"/>
        <end position="271"/>
    </location>
</feature>
<feature type="active site" description="Proton acceptor" evidence="1">
    <location>
        <position position="186"/>
    </location>
</feature>
<feature type="binding site" evidence="1">
    <location>
        <begin position="51"/>
        <end position="52"/>
    </location>
    <ligand>
        <name>3-methyl-2-oxobutanoate</name>
        <dbReference type="ChEBI" id="CHEBI:11851"/>
    </ligand>
</feature>
<feature type="binding site" evidence="1">
    <location>
        <position position="51"/>
    </location>
    <ligand>
        <name>Mg(2+)</name>
        <dbReference type="ChEBI" id="CHEBI:18420"/>
    </ligand>
</feature>
<feature type="binding site" evidence="1">
    <location>
        <position position="90"/>
    </location>
    <ligand>
        <name>3-methyl-2-oxobutanoate</name>
        <dbReference type="ChEBI" id="CHEBI:11851"/>
    </ligand>
</feature>
<feature type="binding site" evidence="1">
    <location>
        <position position="90"/>
    </location>
    <ligand>
        <name>Mg(2+)</name>
        <dbReference type="ChEBI" id="CHEBI:18420"/>
    </ligand>
</feature>
<feature type="binding site" evidence="1">
    <location>
        <position position="118"/>
    </location>
    <ligand>
        <name>3-methyl-2-oxobutanoate</name>
        <dbReference type="ChEBI" id="CHEBI:11851"/>
    </ligand>
</feature>
<feature type="binding site" evidence="1">
    <location>
        <position position="120"/>
    </location>
    <ligand>
        <name>Mg(2+)</name>
        <dbReference type="ChEBI" id="CHEBI:18420"/>
    </ligand>
</feature>
<accession>Q8P9T0</accession>
<evidence type="ECO:0000255" key="1">
    <source>
        <dbReference type="HAMAP-Rule" id="MF_00156"/>
    </source>
</evidence>
<reference key="1">
    <citation type="journal article" date="2002" name="Nature">
        <title>Comparison of the genomes of two Xanthomonas pathogens with differing host specificities.</title>
        <authorList>
            <person name="da Silva A.C.R."/>
            <person name="Ferro J.A."/>
            <person name="Reinach F.C."/>
            <person name="Farah C.S."/>
            <person name="Furlan L.R."/>
            <person name="Quaggio R.B."/>
            <person name="Monteiro-Vitorello C.B."/>
            <person name="Van Sluys M.A."/>
            <person name="Almeida N.F. Jr."/>
            <person name="Alves L.M.C."/>
            <person name="do Amaral A.M."/>
            <person name="Bertolini M.C."/>
            <person name="Camargo L.E.A."/>
            <person name="Camarotte G."/>
            <person name="Cannavan F."/>
            <person name="Cardozo J."/>
            <person name="Chambergo F."/>
            <person name="Ciapina L.P."/>
            <person name="Cicarelli R.M.B."/>
            <person name="Coutinho L.L."/>
            <person name="Cursino-Santos J.R."/>
            <person name="El-Dorry H."/>
            <person name="Faria J.B."/>
            <person name="Ferreira A.J.S."/>
            <person name="Ferreira R.C.C."/>
            <person name="Ferro M.I.T."/>
            <person name="Formighieri E.F."/>
            <person name="Franco M.C."/>
            <person name="Greggio C.C."/>
            <person name="Gruber A."/>
            <person name="Katsuyama A.M."/>
            <person name="Kishi L.T."/>
            <person name="Leite R.P."/>
            <person name="Lemos E.G.M."/>
            <person name="Lemos M.V.F."/>
            <person name="Locali E.C."/>
            <person name="Machado M.A."/>
            <person name="Madeira A.M.B.N."/>
            <person name="Martinez-Rossi N.M."/>
            <person name="Martins E.C."/>
            <person name="Meidanis J."/>
            <person name="Menck C.F.M."/>
            <person name="Miyaki C.Y."/>
            <person name="Moon D.H."/>
            <person name="Moreira L.M."/>
            <person name="Novo M.T.M."/>
            <person name="Okura V.K."/>
            <person name="Oliveira M.C."/>
            <person name="Oliveira V.R."/>
            <person name="Pereira H.A."/>
            <person name="Rossi A."/>
            <person name="Sena J.A.D."/>
            <person name="Silva C."/>
            <person name="de Souza R.F."/>
            <person name="Spinola L.A.F."/>
            <person name="Takita M.A."/>
            <person name="Tamura R.E."/>
            <person name="Teixeira E.C."/>
            <person name="Tezza R.I.D."/>
            <person name="Trindade dos Santos M."/>
            <person name="Truffi D."/>
            <person name="Tsai S.M."/>
            <person name="White F.F."/>
            <person name="Setubal J.C."/>
            <person name="Kitajima J.P."/>
        </authorList>
    </citation>
    <scope>NUCLEOTIDE SEQUENCE [LARGE SCALE GENOMIC DNA]</scope>
    <source>
        <strain>ATCC 33913 / DSM 3586 / NCPPB 528 / LMG 568 / P 25</strain>
    </source>
</reference>